<name>ANO39_PATPE</name>
<proteinExistence type="evidence at protein level"/>
<reference evidence="6 8" key="1">
    <citation type="journal article" date="2000" name="Biochemistry">
        <title>Chemical structure of nuclear proteins which are phosphorylated during meiotic maturation of starfish oocytes.</title>
        <authorList>
            <person name="Matoba K."/>
            <person name="Matsumoto Y."/>
            <person name="Hongo T."/>
            <person name="Nagamatsu Y."/>
            <person name="Sugino H."/>
            <person name="Shimizu T."/>
            <person name="Takao T."/>
            <person name="Shimonishi Y."/>
            <person name="Ikegami S."/>
        </authorList>
    </citation>
    <scope>NUCLEOTIDE SEQUENCE [MRNA]</scope>
    <scope>PROTEIN SEQUENCE OF 2-15; 20-81; 155-166; 294-301; 304-312 AND 319-346</scope>
    <scope>FUNCTION</scope>
    <scope>SUBCELLULAR LOCATION</scope>
    <scope>ACETYLATION AT SER-2</scope>
    <scope>PHOSPHORYLATION AT SER-145</scope>
    <scope>VARIANT THR-52</scope>
    <scope>IDENTIFICATION BY MASS SPECTROMETRY</scope>
    <source>
        <tissue evidence="4">Ovary</tissue>
    </source>
</reference>
<reference evidence="6 7" key="2">
    <citation type="journal article" date="2000" name="Eur. J. Biochem.">
        <title>Molecular characterization of a novel nucleolar protein in starfish oocytes which is phosphorylated before and during oocyte maturation.</title>
        <authorList>
            <person name="Nakajima H."/>
            <person name="Matoba K."/>
            <person name="Matsumoto Y."/>
            <person name="Hongo T."/>
            <person name="Kiritaka K."/>
            <person name="Sugino H."/>
            <person name="Nagamatsu Y."/>
            <person name="Hamaguchi Y."/>
            <person name="Ikegami S."/>
        </authorList>
    </citation>
    <scope>NUCLEOTIDE SEQUENCE [MRNA]</scope>
    <scope>PROTEIN SEQUENCE OF 4-15; 55-81 AND 155-166</scope>
    <scope>SUBCELLULAR LOCATION</scope>
    <scope>TISSUE SPECIFICITY</scope>
    <scope>DEVELOPMENTAL STAGE</scope>
    <scope>PHOSPHORYLATION AT SER-145</scope>
    <scope>IDENTIFICATION BY MASS SPECTROMETRY</scope>
    <source>
        <tissue evidence="3">Ovary</tissue>
    </source>
</reference>
<keyword id="KW-0007">Acetylation</keyword>
<keyword id="KW-0963">Cytoplasm</keyword>
<keyword id="KW-0903">Direct protein sequencing</keyword>
<keyword id="KW-0238">DNA-binding</keyword>
<keyword id="KW-0325">Glycoprotein</keyword>
<keyword id="KW-0539">Nucleus</keyword>
<keyword id="KW-0597">Phosphoprotein</keyword>
<keyword id="KW-0694">RNA-binding</keyword>
<comment type="function">
    <text evidence="4">Binds double-stranded RNA and both single-stranded and double-stranded DNA.</text>
</comment>
<comment type="subcellular location">
    <subcellularLocation>
        <location evidence="3 4">Nucleus</location>
        <location evidence="3 4">Nucleolus</location>
    </subcellularLocation>
    <subcellularLocation>
        <location evidence="3 4">Cytoplasm</location>
    </subcellularLocation>
    <text evidence="3 4">In oocytes, expression is limited to the germinal vesicle with highest levels in the nucleolus although a considerable portion is present in other regions of the germinal vesicle. In oocytes that progress to the first meiotic metaphase, diffuse expression is observed throughout the egg cytoplasm.</text>
</comment>
<comment type="tissue specificity">
    <text evidence="3">Expressed specifically in the oocytes of the ovaries.</text>
</comment>
<comment type="developmental stage">
    <text evidence="3">Expressed maternally in immature oocytes at high levels but is scarcely detectable in mature oocytes or in embryos at the morula and blastula stages.</text>
</comment>
<comment type="PTM">
    <text evidence="3 4">Phosphorylation occurs in oocytes during the progression of the first meiotic M phase. No phosphorylation is observed in immature oocytes.</text>
</comment>
<comment type="similarity">
    <text evidence="1">Belongs to the nucleoplasmin family.</text>
</comment>
<accession>Q9NLA3</accession>
<accession>Q8WSV9</accession>
<dbReference type="EMBL" id="AB037176">
    <property type="protein sequence ID" value="BAB82492.1"/>
    <property type="molecule type" value="mRNA"/>
</dbReference>
<dbReference type="EMBL" id="AB003034">
    <property type="protein sequence ID" value="BAA90827.1"/>
    <property type="molecule type" value="mRNA"/>
</dbReference>
<dbReference type="SMR" id="Q9NLA3"/>
<dbReference type="iPTMnet" id="Q9NLA3"/>
<dbReference type="GO" id="GO:0005737">
    <property type="term" value="C:cytoplasm"/>
    <property type="evidence" value="ECO:0007669"/>
    <property type="project" value="UniProtKB-SubCell"/>
</dbReference>
<dbReference type="GO" id="GO:0005730">
    <property type="term" value="C:nucleolus"/>
    <property type="evidence" value="ECO:0007669"/>
    <property type="project" value="UniProtKB-SubCell"/>
</dbReference>
<dbReference type="GO" id="GO:0005654">
    <property type="term" value="C:nucleoplasm"/>
    <property type="evidence" value="ECO:0000314"/>
    <property type="project" value="UniProtKB"/>
</dbReference>
<dbReference type="GO" id="GO:0005634">
    <property type="term" value="C:nucleus"/>
    <property type="evidence" value="ECO:0000314"/>
    <property type="project" value="UniProtKB"/>
</dbReference>
<dbReference type="GO" id="GO:0003682">
    <property type="term" value="F:chromatin binding"/>
    <property type="evidence" value="ECO:0007669"/>
    <property type="project" value="TreeGrafter"/>
</dbReference>
<dbReference type="GO" id="GO:0003677">
    <property type="term" value="F:DNA binding"/>
    <property type="evidence" value="ECO:0000314"/>
    <property type="project" value="UniProtKB"/>
</dbReference>
<dbReference type="GO" id="GO:0042393">
    <property type="term" value="F:histone binding"/>
    <property type="evidence" value="ECO:0007669"/>
    <property type="project" value="TreeGrafter"/>
</dbReference>
<dbReference type="GO" id="GO:0003723">
    <property type="term" value="F:RNA binding"/>
    <property type="evidence" value="ECO:0000314"/>
    <property type="project" value="UniProtKB"/>
</dbReference>
<dbReference type="GO" id="GO:0006338">
    <property type="term" value="P:chromatin remodeling"/>
    <property type="evidence" value="ECO:0007669"/>
    <property type="project" value="TreeGrafter"/>
</dbReference>
<dbReference type="GO" id="GO:0000278">
    <property type="term" value="P:mitotic cell cycle"/>
    <property type="evidence" value="ECO:0000303"/>
    <property type="project" value="UniProtKB"/>
</dbReference>
<dbReference type="GO" id="GO:0001556">
    <property type="term" value="P:oocyte maturation"/>
    <property type="evidence" value="ECO:0000270"/>
    <property type="project" value="UniProtKB"/>
</dbReference>
<dbReference type="FunFam" id="1.10.10.2100:FF:000002">
    <property type="entry name" value="cell growth-regulating nucleolar protein-like"/>
    <property type="match status" value="1"/>
</dbReference>
<dbReference type="FunFam" id="2.60.120.340:FF:000007">
    <property type="entry name" value="Nucleophosmin 1a"/>
    <property type="match status" value="1"/>
</dbReference>
<dbReference type="Gene3D" id="1.10.10.2100">
    <property type="match status" value="1"/>
</dbReference>
<dbReference type="Gene3D" id="2.60.120.340">
    <property type="entry name" value="Nucleoplasmin core domain"/>
    <property type="match status" value="1"/>
</dbReference>
<dbReference type="InterPro" id="IPR032569">
    <property type="entry name" value="NPM1_C"/>
</dbReference>
<dbReference type="InterPro" id="IPR004301">
    <property type="entry name" value="Nucleoplasmin"/>
</dbReference>
<dbReference type="InterPro" id="IPR024057">
    <property type="entry name" value="Nucleoplasmin_core_dom"/>
</dbReference>
<dbReference type="InterPro" id="IPR036824">
    <property type="entry name" value="Nucleoplasmin_core_dom_sf"/>
</dbReference>
<dbReference type="PANTHER" id="PTHR22747:SF18">
    <property type="entry name" value="GEO09167P1-RELATED"/>
    <property type="match status" value="1"/>
</dbReference>
<dbReference type="PANTHER" id="PTHR22747">
    <property type="entry name" value="NUCLEOPLASMIN"/>
    <property type="match status" value="1"/>
</dbReference>
<dbReference type="Pfam" id="PF16276">
    <property type="entry name" value="NPM1-C"/>
    <property type="match status" value="1"/>
</dbReference>
<dbReference type="Pfam" id="PF03066">
    <property type="entry name" value="Nucleoplasmin"/>
    <property type="match status" value="1"/>
</dbReference>
<dbReference type="SUPFAM" id="SSF69203">
    <property type="entry name" value="Nucleoplasmin-like core domain"/>
    <property type="match status" value="1"/>
</dbReference>
<evidence type="ECO:0000255" key="1"/>
<evidence type="ECO:0000256" key="2">
    <source>
        <dbReference type="SAM" id="MobiDB-lite"/>
    </source>
</evidence>
<evidence type="ECO:0000269" key="3">
    <source>
    </source>
</evidence>
<evidence type="ECO:0000269" key="4">
    <source>
    </source>
</evidence>
<evidence type="ECO:0000303" key="5">
    <source>
    </source>
</evidence>
<evidence type="ECO:0000305" key="6"/>
<evidence type="ECO:0000312" key="7">
    <source>
        <dbReference type="EMBL" id="BAA90827.1"/>
    </source>
</evidence>
<evidence type="ECO:0000312" key="8">
    <source>
        <dbReference type="EMBL" id="BAB82492.1"/>
    </source>
</evidence>
<protein>
    <recommendedName>
        <fullName>Nucleoplasmin-like protein ANO39</fullName>
    </recommendedName>
    <alternativeName>
        <fullName>39 kDa oocyte-expressed nucleolar protein</fullName>
    </alternativeName>
    <alternativeName>
        <fullName evidence="7">Nucleic acid-associated protein 36</fullName>
    </alternativeName>
    <alternativeName>
        <fullName evidence="5">Nucleic acid-binding nuclear protein</fullName>
        <shortName evidence="5">NAAP</shortName>
        <shortName evidence="5">NAAP1</shortName>
        <shortName evidence="5">NAAP2</shortName>
    </alternativeName>
</protein>
<organism>
    <name type="scientific">Patiria pectinifera</name>
    <name type="common">Starfish</name>
    <name type="synonym">Asterina pectinifera</name>
    <dbReference type="NCBI Taxonomy" id="7594"/>
    <lineage>
        <taxon>Eukaryota</taxon>
        <taxon>Metazoa</taxon>
        <taxon>Echinodermata</taxon>
        <taxon>Eleutherozoa</taxon>
        <taxon>Asterozoa</taxon>
        <taxon>Asteroidea</taxon>
        <taxon>Valvatacea</taxon>
        <taxon>Valvatida</taxon>
        <taxon>Asterinidae</taxon>
        <taxon>Patiria</taxon>
    </lineage>
</organism>
<feature type="initiator methionine" description="Removed" evidence="4">
    <location>
        <position position="1"/>
    </location>
</feature>
<feature type="chain" id="PRO_0000396520" description="Nucleoplasmin-like protein ANO39">
    <location>
        <begin position="2"/>
        <end position="346"/>
    </location>
</feature>
<feature type="region of interest" description="Disordered" evidence="2">
    <location>
        <begin position="123"/>
        <end position="285"/>
    </location>
</feature>
<feature type="compositionally biased region" description="Acidic residues" evidence="2">
    <location>
        <begin position="123"/>
        <end position="141"/>
    </location>
</feature>
<feature type="compositionally biased region" description="Basic and acidic residues" evidence="2">
    <location>
        <begin position="171"/>
        <end position="180"/>
    </location>
</feature>
<feature type="compositionally biased region" description="Acidic residues" evidence="2">
    <location>
        <begin position="181"/>
        <end position="247"/>
    </location>
</feature>
<feature type="compositionally biased region" description="Basic and acidic residues" evidence="2">
    <location>
        <begin position="271"/>
        <end position="285"/>
    </location>
</feature>
<feature type="modified residue" description="N-acetylserine" evidence="4">
    <location>
        <position position="2"/>
    </location>
</feature>
<feature type="modified residue" description="Phosphoserine; by CDC2" evidence="3 4">
    <location>
        <position position="145"/>
    </location>
</feature>
<feature type="glycosylation site" description="N-linked (GlcNAc...) asparagine" evidence="1">
    <location>
        <position position="85"/>
    </location>
</feature>
<feature type="glycosylation site" description="N-linked (GlcNAc...) asparagine" evidence="1">
    <location>
        <position position="264"/>
    </location>
</feature>
<feature type="sequence variant" evidence="4">
    <original>N</original>
    <variation>T</variation>
    <location>
        <position position="52"/>
    </location>
</feature>
<sequence length="346" mass="39005">MSKEFFWGDSLTGTKKEVKWNPSLDDEDDFDNLDSDGIQHFLFLKQAVLGANAKEGERNVVEIETENFDGDNVKQPLFSLKLGLNESSPLDIGIQPPVTFILTAGSGPVFLSGQHMIEISADDEEELEEDDEEEEEEDEVEVNASPDLPVAKSKKRPLSTSDGTAKKTKMAKLDKDADKKEDDDEEEDDEEEDEVMAMMDDDEDDEDDEDFEGGEDDEEEDEEESDEDEDDEDDNEEEEEEDEDEESPEKPLKTTAKGKKGQMNGTTTAKGDNKPKAKAKTDTKLVKGKAKKKVLALDEIKGKLQESSNVPKKEEKFKNYVRSAFHISEAKKLQDLWGWFRASLQK</sequence>